<gene>
    <name evidence="1" type="primary">dapB</name>
    <name type="ordered locus">THA_173</name>
</gene>
<comment type="function">
    <text evidence="1">Catalyzes the conversion of 4-hydroxy-tetrahydrodipicolinate (HTPA) to tetrahydrodipicolinate.</text>
</comment>
<comment type="catalytic activity">
    <reaction evidence="1">
        <text>(S)-2,3,4,5-tetrahydrodipicolinate + NAD(+) + H2O = (2S,4S)-4-hydroxy-2,3,4,5-tetrahydrodipicolinate + NADH + H(+)</text>
        <dbReference type="Rhea" id="RHEA:35323"/>
        <dbReference type="ChEBI" id="CHEBI:15377"/>
        <dbReference type="ChEBI" id="CHEBI:15378"/>
        <dbReference type="ChEBI" id="CHEBI:16845"/>
        <dbReference type="ChEBI" id="CHEBI:57540"/>
        <dbReference type="ChEBI" id="CHEBI:57945"/>
        <dbReference type="ChEBI" id="CHEBI:67139"/>
        <dbReference type="EC" id="1.17.1.8"/>
    </reaction>
</comment>
<comment type="catalytic activity">
    <reaction evidence="1">
        <text>(S)-2,3,4,5-tetrahydrodipicolinate + NADP(+) + H2O = (2S,4S)-4-hydroxy-2,3,4,5-tetrahydrodipicolinate + NADPH + H(+)</text>
        <dbReference type="Rhea" id="RHEA:35331"/>
        <dbReference type="ChEBI" id="CHEBI:15377"/>
        <dbReference type="ChEBI" id="CHEBI:15378"/>
        <dbReference type="ChEBI" id="CHEBI:16845"/>
        <dbReference type="ChEBI" id="CHEBI:57783"/>
        <dbReference type="ChEBI" id="CHEBI:58349"/>
        <dbReference type="ChEBI" id="CHEBI:67139"/>
        <dbReference type="EC" id="1.17.1.8"/>
    </reaction>
</comment>
<comment type="pathway">
    <text evidence="1">Amino-acid biosynthesis; L-lysine biosynthesis via DAP pathway; (S)-tetrahydrodipicolinate from L-aspartate: step 4/4.</text>
</comment>
<comment type="subcellular location">
    <subcellularLocation>
        <location evidence="1">Cytoplasm</location>
    </subcellularLocation>
</comment>
<comment type="similarity">
    <text evidence="1">Belongs to the DapB family.</text>
</comment>
<comment type="caution">
    <text evidence="2">Was originally thought to be a dihydrodipicolinate reductase (DHDPR), catalyzing the conversion of dihydrodipicolinate to tetrahydrodipicolinate. However, it was shown in E.coli that the substrate of the enzymatic reaction is not dihydrodipicolinate (DHDP) but in fact (2S,4S)-4-hydroxy-2,3,4,5-tetrahydrodipicolinic acid (HTPA), the product released by the DapA-catalyzed reaction.</text>
</comment>
<protein>
    <recommendedName>
        <fullName evidence="1">4-hydroxy-tetrahydrodipicolinate reductase</fullName>
        <shortName evidence="1">HTPA reductase</shortName>
        <ecNumber evidence="1">1.17.1.8</ecNumber>
    </recommendedName>
</protein>
<reference key="1">
    <citation type="journal article" date="2009" name="J. Bacteriol.">
        <title>The genome of Thermosipho africanus TCF52B: lateral genetic connections to the Firmicutes and Archaea.</title>
        <authorList>
            <person name="Nesboe C.L."/>
            <person name="Bapteste E."/>
            <person name="Curtis B."/>
            <person name="Dahle H."/>
            <person name="Lopez P."/>
            <person name="Macleod D."/>
            <person name="Dlutek M."/>
            <person name="Bowman S."/>
            <person name="Zhaxybayeva O."/>
            <person name="Birkeland N.-K."/>
            <person name="Doolittle W.F."/>
        </authorList>
    </citation>
    <scope>NUCLEOTIDE SEQUENCE [LARGE SCALE GENOMIC DNA]</scope>
    <source>
        <strain>TCF52B</strain>
    </source>
</reference>
<organism>
    <name type="scientific">Thermosipho africanus (strain TCF52B)</name>
    <dbReference type="NCBI Taxonomy" id="484019"/>
    <lineage>
        <taxon>Bacteria</taxon>
        <taxon>Thermotogati</taxon>
        <taxon>Thermotogota</taxon>
        <taxon>Thermotogae</taxon>
        <taxon>Thermotogales</taxon>
        <taxon>Fervidobacteriaceae</taxon>
        <taxon>Thermosipho</taxon>
    </lineage>
</organism>
<sequence>MRFGVVGFKGKMGKVILDVFSNDGHTPILLIDKDEIIEEDFPEVIVDFSTPDALEKTSSYCEKYNSNLVIGTTALTEKHFKILENLSKKVAVVQSYNFSIGINILLELLEKATKMLNDWDCEITEIHHSKKKDKPSGTAILLKNALNREVEIHSLRLGGIPGDHTVLFSNEGELIEIKHRAISRKVFALGALKAAKFILNKKSGFYTFKDIIKEAFI</sequence>
<keyword id="KW-0028">Amino-acid biosynthesis</keyword>
<keyword id="KW-0963">Cytoplasm</keyword>
<keyword id="KW-0220">Diaminopimelate biosynthesis</keyword>
<keyword id="KW-0457">Lysine biosynthesis</keyword>
<keyword id="KW-0520">NAD</keyword>
<keyword id="KW-0521">NADP</keyword>
<keyword id="KW-0560">Oxidoreductase</keyword>
<keyword id="KW-1185">Reference proteome</keyword>
<evidence type="ECO:0000255" key="1">
    <source>
        <dbReference type="HAMAP-Rule" id="MF_00102"/>
    </source>
</evidence>
<evidence type="ECO:0000305" key="2"/>
<feature type="chain" id="PRO_1000117377" description="4-hydroxy-tetrahydrodipicolinate reductase">
    <location>
        <begin position="1"/>
        <end position="217"/>
    </location>
</feature>
<feature type="active site" description="Proton donor/acceptor" evidence="1">
    <location>
        <position position="127"/>
    </location>
</feature>
<feature type="active site" description="Proton donor" evidence="1">
    <location>
        <position position="131"/>
    </location>
</feature>
<feature type="binding site" evidence="1">
    <location>
        <begin position="7"/>
        <end position="12"/>
    </location>
    <ligand>
        <name>NAD(+)</name>
        <dbReference type="ChEBI" id="CHEBI:57540"/>
    </ligand>
</feature>
<feature type="binding site" evidence="1">
    <location>
        <begin position="71"/>
        <end position="73"/>
    </location>
    <ligand>
        <name>NAD(+)</name>
        <dbReference type="ChEBI" id="CHEBI:57540"/>
    </ligand>
</feature>
<feature type="binding site" evidence="1">
    <location>
        <begin position="95"/>
        <end position="98"/>
    </location>
    <ligand>
        <name>NAD(+)</name>
        <dbReference type="ChEBI" id="CHEBI:57540"/>
    </ligand>
</feature>
<feature type="binding site" evidence="1">
    <location>
        <position position="128"/>
    </location>
    <ligand>
        <name>(S)-2,3,4,5-tetrahydrodipicolinate</name>
        <dbReference type="ChEBI" id="CHEBI:16845"/>
    </ligand>
</feature>
<feature type="binding site" evidence="1">
    <location>
        <begin position="137"/>
        <end position="138"/>
    </location>
    <ligand>
        <name>(S)-2,3,4,5-tetrahydrodipicolinate</name>
        <dbReference type="ChEBI" id="CHEBI:16845"/>
    </ligand>
</feature>
<accession>B7IF14</accession>
<dbReference type="EC" id="1.17.1.8" evidence="1"/>
<dbReference type="EMBL" id="CP001185">
    <property type="protein sequence ID" value="ACJ74678.1"/>
    <property type="molecule type" value="Genomic_DNA"/>
</dbReference>
<dbReference type="RefSeq" id="WP_012579389.1">
    <property type="nucleotide sequence ID" value="NC_011653.1"/>
</dbReference>
<dbReference type="SMR" id="B7IF14"/>
<dbReference type="STRING" id="484019.THA_173"/>
<dbReference type="KEGG" id="taf:THA_173"/>
<dbReference type="eggNOG" id="COG0289">
    <property type="taxonomic scope" value="Bacteria"/>
</dbReference>
<dbReference type="HOGENOM" id="CLU_047479_1_1_0"/>
<dbReference type="OrthoDB" id="9790352at2"/>
<dbReference type="UniPathway" id="UPA00034">
    <property type="reaction ID" value="UER00018"/>
</dbReference>
<dbReference type="Proteomes" id="UP000002453">
    <property type="component" value="Chromosome"/>
</dbReference>
<dbReference type="GO" id="GO:0005829">
    <property type="term" value="C:cytosol"/>
    <property type="evidence" value="ECO:0007669"/>
    <property type="project" value="TreeGrafter"/>
</dbReference>
<dbReference type="GO" id="GO:0008839">
    <property type="term" value="F:4-hydroxy-tetrahydrodipicolinate reductase"/>
    <property type="evidence" value="ECO:0007669"/>
    <property type="project" value="UniProtKB-EC"/>
</dbReference>
<dbReference type="GO" id="GO:0051287">
    <property type="term" value="F:NAD binding"/>
    <property type="evidence" value="ECO:0007669"/>
    <property type="project" value="UniProtKB-UniRule"/>
</dbReference>
<dbReference type="GO" id="GO:0050661">
    <property type="term" value="F:NADP binding"/>
    <property type="evidence" value="ECO:0007669"/>
    <property type="project" value="UniProtKB-UniRule"/>
</dbReference>
<dbReference type="GO" id="GO:0016726">
    <property type="term" value="F:oxidoreductase activity, acting on CH or CH2 groups, NAD or NADP as acceptor"/>
    <property type="evidence" value="ECO:0007669"/>
    <property type="project" value="UniProtKB-UniRule"/>
</dbReference>
<dbReference type="GO" id="GO:0019877">
    <property type="term" value="P:diaminopimelate biosynthetic process"/>
    <property type="evidence" value="ECO:0007669"/>
    <property type="project" value="UniProtKB-UniRule"/>
</dbReference>
<dbReference type="GO" id="GO:0009089">
    <property type="term" value="P:lysine biosynthetic process via diaminopimelate"/>
    <property type="evidence" value="ECO:0007669"/>
    <property type="project" value="UniProtKB-UniRule"/>
</dbReference>
<dbReference type="CDD" id="cd02274">
    <property type="entry name" value="DHDPR_N"/>
    <property type="match status" value="1"/>
</dbReference>
<dbReference type="Gene3D" id="3.40.50.720">
    <property type="entry name" value="NAD(P)-binding Rossmann-like Domain"/>
    <property type="match status" value="2"/>
</dbReference>
<dbReference type="HAMAP" id="MF_00102">
    <property type="entry name" value="DapB"/>
    <property type="match status" value="1"/>
</dbReference>
<dbReference type="InterPro" id="IPR022663">
    <property type="entry name" value="DapB_C"/>
</dbReference>
<dbReference type="InterPro" id="IPR000846">
    <property type="entry name" value="DapB_N"/>
</dbReference>
<dbReference type="InterPro" id="IPR022664">
    <property type="entry name" value="DapB_N_CS"/>
</dbReference>
<dbReference type="InterPro" id="IPR023940">
    <property type="entry name" value="DHDPR_bac"/>
</dbReference>
<dbReference type="InterPro" id="IPR036291">
    <property type="entry name" value="NAD(P)-bd_dom_sf"/>
</dbReference>
<dbReference type="PANTHER" id="PTHR20836:SF0">
    <property type="entry name" value="4-HYDROXY-TETRAHYDRODIPICOLINATE REDUCTASE 1, CHLOROPLASTIC-RELATED"/>
    <property type="match status" value="1"/>
</dbReference>
<dbReference type="PANTHER" id="PTHR20836">
    <property type="entry name" value="DIHYDRODIPICOLINATE REDUCTASE"/>
    <property type="match status" value="1"/>
</dbReference>
<dbReference type="Pfam" id="PF05173">
    <property type="entry name" value="DapB_C"/>
    <property type="match status" value="1"/>
</dbReference>
<dbReference type="Pfam" id="PF01113">
    <property type="entry name" value="DapB_N"/>
    <property type="match status" value="1"/>
</dbReference>
<dbReference type="PIRSF" id="PIRSF000161">
    <property type="entry name" value="DHPR"/>
    <property type="match status" value="1"/>
</dbReference>
<dbReference type="SUPFAM" id="SSF55347">
    <property type="entry name" value="Glyceraldehyde-3-phosphate dehydrogenase-like, C-terminal domain"/>
    <property type="match status" value="1"/>
</dbReference>
<dbReference type="SUPFAM" id="SSF51735">
    <property type="entry name" value="NAD(P)-binding Rossmann-fold domains"/>
    <property type="match status" value="1"/>
</dbReference>
<dbReference type="PROSITE" id="PS01298">
    <property type="entry name" value="DAPB"/>
    <property type="match status" value="1"/>
</dbReference>
<proteinExistence type="inferred from homology"/>
<name>DAPB_THEAB</name>